<evidence type="ECO:0000255" key="1">
    <source>
        <dbReference type="HAMAP-Rule" id="MF_00376"/>
    </source>
</evidence>
<protein>
    <recommendedName>
        <fullName evidence="1">Dephospho-CoA kinase</fullName>
        <ecNumber evidence="1">2.7.1.24</ecNumber>
    </recommendedName>
    <alternativeName>
        <fullName evidence="1">Dephosphocoenzyme A kinase</fullName>
    </alternativeName>
</protein>
<feature type="chain" id="PRO_0000243283" description="Dephospho-CoA kinase">
    <location>
        <begin position="1"/>
        <end position="200"/>
    </location>
</feature>
<feature type="domain" description="DPCK" evidence="1">
    <location>
        <begin position="3"/>
        <end position="200"/>
    </location>
</feature>
<feature type="binding site" evidence="1">
    <location>
        <begin position="11"/>
        <end position="16"/>
    </location>
    <ligand>
        <name>ATP</name>
        <dbReference type="ChEBI" id="CHEBI:30616"/>
    </ligand>
</feature>
<gene>
    <name evidence="1" type="primary">coaE</name>
    <name type="ordered locus">Ecaj_0277</name>
</gene>
<accession>Q3YSI1</accession>
<proteinExistence type="inferred from homology"/>
<organism>
    <name type="scientific">Ehrlichia canis (strain Jake)</name>
    <dbReference type="NCBI Taxonomy" id="269484"/>
    <lineage>
        <taxon>Bacteria</taxon>
        <taxon>Pseudomonadati</taxon>
        <taxon>Pseudomonadota</taxon>
        <taxon>Alphaproteobacteria</taxon>
        <taxon>Rickettsiales</taxon>
        <taxon>Anaplasmataceae</taxon>
        <taxon>Ehrlichia</taxon>
    </lineage>
</organism>
<sequence length="200" mass="23310">MVIFGLTGGIGSGKSLVASYFSTFFKAKIFDADKVVHELYKYDSDVIRLVSEYFPDSVDNGIVDRNNLRQHFLTDNHLWVEFQSVIHAIVLKKKKDFIMLHNRRSVRYVVLDIPLLIESNFYSCCDFIIHVTTSRLLQMQRVLRRGLSIKEFESIRCKQLSESSRKKFANFTIRTGLSKKDILFQIKKIMLNVNNKCNMD</sequence>
<keyword id="KW-0067">ATP-binding</keyword>
<keyword id="KW-0173">Coenzyme A biosynthesis</keyword>
<keyword id="KW-0963">Cytoplasm</keyword>
<keyword id="KW-0418">Kinase</keyword>
<keyword id="KW-0547">Nucleotide-binding</keyword>
<keyword id="KW-0808">Transferase</keyword>
<reference key="1">
    <citation type="journal article" date="2006" name="J. Bacteriol.">
        <title>The genome of the obligately intracellular bacterium Ehrlichia canis reveals themes of complex membrane structure and immune evasion strategies.</title>
        <authorList>
            <person name="Mavromatis K."/>
            <person name="Doyle C.K."/>
            <person name="Lykidis A."/>
            <person name="Ivanova N."/>
            <person name="Francino M.P."/>
            <person name="Chain P."/>
            <person name="Shin M."/>
            <person name="Malfatti S."/>
            <person name="Larimer F."/>
            <person name="Copeland A."/>
            <person name="Detter J.C."/>
            <person name="Land M."/>
            <person name="Richardson P.M."/>
            <person name="Yu X.J."/>
            <person name="Walker D.H."/>
            <person name="McBride J.W."/>
            <person name="Kyrpides N.C."/>
        </authorList>
    </citation>
    <scope>NUCLEOTIDE SEQUENCE [LARGE SCALE GENOMIC DNA]</scope>
    <source>
        <strain>Jake</strain>
    </source>
</reference>
<comment type="function">
    <text evidence="1">Catalyzes the phosphorylation of the 3'-hydroxyl group of dephosphocoenzyme A to form coenzyme A.</text>
</comment>
<comment type="catalytic activity">
    <reaction evidence="1">
        <text>3'-dephospho-CoA + ATP = ADP + CoA + H(+)</text>
        <dbReference type="Rhea" id="RHEA:18245"/>
        <dbReference type="ChEBI" id="CHEBI:15378"/>
        <dbReference type="ChEBI" id="CHEBI:30616"/>
        <dbReference type="ChEBI" id="CHEBI:57287"/>
        <dbReference type="ChEBI" id="CHEBI:57328"/>
        <dbReference type="ChEBI" id="CHEBI:456216"/>
        <dbReference type="EC" id="2.7.1.24"/>
    </reaction>
</comment>
<comment type="pathway">
    <text evidence="1">Cofactor biosynthesis; coenzyme A biosynthesis; CoA from (R)-pantothenate: step 5/5.</text>
</comment>
<comment type="subcellular location">
    <subcellularLocation>
        <location evidence="1">Cytoplasm</location>
    </subcellularLocation>
</comment>
<comment type="similarity">
    <text evidence="1">Belongs to the CoaE family.</text>
</comment>
<name>COAE_EHRCJ</name>
<dbReference type="EC" id="2.7.1.24" evidence="1"/>
<dbReference type="EMBL" id="CP000107">
    <property type="protein sequence ID" value="AAZ68324.1"/>
    <property type="molecule type" value="Genomic_DNA"/>
</dbReference>
<dbReference type="RefSeq" id="WP_011304402.1">
    <property type="nucleotide sequence ID" value="NC_007354.1"/>
</dbReference>
<dbReference type="SMR" id="Q3YSI1"/>
<dbReference type="FunCoup" id="Q3YSI1">
    <property type="interactions" value="254"/>
</dbReference>
<dbReference type="STRING" id="269484.Ecaj_0277"/>
<dbReference type="KEGG" id="ecn:Ecaj_0277"/>
<dbReference type="eggNOG" id="COG0237">
    <property type="taxonomic scope" value="Bacteria"/>
</dbReference>
<dbReference type="HOGENOM" id="CLU_057180_3_0_5"/>
<dbReference type="InParanoid" id="Q3YSI1"/>
<dbReference type="UniPathway" id="UPA00241">
    <property type="reaction ID" value="UER00356"/>
</dbReference>
<dbReference type="Proteomes" id="UP000000435">
    <property type="component" value="Chromosome"/>
</dbReference>
<dbReference type="GO" id="GO:0005737">
    <property type="term" value="C:cytoplasm"/>
    <property type="evidence" value="ECO:0007669"/>
    <property type="project" value="UniProtKB-SubCell"/>
</dbReference>
<dbReference type="GO" id="GO:0005524">
    <property type="term" value="F:ATP binding"/>
    <property type="evidence" value="ECO:0007669"/>
    <property type="project" value="UniProtKB-UniRule"/>
</dbReference>
<dbReference type="GO" id="GO:0004140">
    <property type="term" value="F:dephospho-CoA kinase activity"/>
    <property type="evidence" value="ECO:0007669"/>
    <property type="project" value="UniProtKB-UniRule"/>
</dbReference>
<dbReference type="GO" id="GO:0015937">
    <property type="term" value="P:coenzyme A biosynthetic process"/>
    <property type="evidence" value="ECO:0007669"/>
    <property type="project" value="UniProtKB-UniRule"/>
</dbReference>
<dbReference type="CDD" id="cd02022">
    <property type="entry name" value="DPCK"/>
    <property type="match status" value="1"/>
</dbReference>
<dbReference type="Gene3D" id="3.40.50.300">
    <property type="entry name" value="P-loop containing nucleotide triphosphate hydrolases"/>
    <property type="match status" value="1"/>
</dbReference>
<dbReference type="HAMAP" id="MF_00376">
    <property type="entry name" value="Dephospho_CoA_kinase"/>
    <property type="match status" value="1"/>
</dbReference>
<dbReference type="InterPro" id="IPR001977">
    <property type="entry name" value="Depp_CoAkinase"/>
</dbReference>
<dbReference type="InterPro" id="IPR027417">
    <property type="entry name" value="P-loop_NTPase"/>
</dbReference>
<dbReference type="NCBIfam" id="TIGR00152">
    <property type="entry name" value="dephospho-CoA kinase"/>
    <property type="match status" value="1"/>
</dbReference>
<dbReference type="PANTHER" id="PTHR10695:SF46">
    <property type="entry name" value="BIFUNCTIONAL COENZYME A SYNTHASE-RELATED"/>
    <property type="match status" value="1"/>
</dbReference>
<dbReference type="PANTHER" id="PTHR10695">
    <property type="entry name" value="DEPHOSPHO-COA KINASE-RELATED"/>
    <property type="match status" value="1"/>
</dbReference>
<dbReference type="Pfam" id="PF01121">
    <property type="entry name" value="CoaE"/>
    <property type="match status" value="1"/>
</dbReference>
<dbReference type="SUPFAM" id="SSF52540">
    <property type="entry name" value="P-loop containing nucleoside triphosphate hydrolases"/>
    <property type="match status" value="1"/>
</dbReference>
<dbReference type="PROSITE" id="PS51219">
    <property type="entry name" value="DPCK"/>
    <property type="match status" value="1"/>
</dbReference>